<dbReference type="EC" id="2.1.1.199" evidence="1"/>
<dbReference type="EMBL" id="CP001217">
    <property type="protein sequence ID" value="ACJ07870.1"/>
    <property type="molecule type" value="Genomic_DNA"/>
</dbReference>
<dbReference type="SMR" id="B6JLU2"/>
<dbReference type="KEGG" id="hpp:HPP12_0718"/>
<dbReference type="HOGENOM" id="CLU_038422_3_0_7"/>
<dbReference type="Proteomes" id="UP000008198">
    <property type="component" value="Chromosome"/>
</dbReference>
<dbReference type="GO" id="GO:0005737">
    <property type="term" value="C:cytoplasm"/>
    <property type="evidence" value="ECO:0007669"/>
    <property type="project" value="UniProtKB-SubCell"/>
</dbReference>
<dbReference type="GO" id="GO:0071424">
    <property type="term" value="F:rRNA (cytosine-N4-)-methyltransferase activity"/>
    <property type="evidence" value="ECO:0007669"/>
    <property type="project" value="UniProtKB-UniRule"/>
</dbReference>
<dbReference type="GO" id="GO:0070475">
    <property type="term" value="P:rRNA base methylation"/>
    <property type="evidence" value="ECO:0007669"/>
    <property type="project" value="UniProtKB-UniRule"/>
</dbReference>
<dbReference type="FunFam" id="1.10.150.170:FF:000008">
    <property type="entry name" value="Ribosomal RNA small subunit methyltransferase H"/>
    <property type="match status" value="1"/>
</dbReference>
<dbReference type="Gene3D" id="1.10.150.170">
    <property type="entry name" value="Putative methyltransferase TM0872, insert domain"/>
    <property type="match status" value="1"/>
</dbReference>
<dbReference type="Gene3D" id="3.40.50.150">
    <property type="entry name" value="Vaccinia Virus protein VP39"/>
    <property type="match status" value="1"/>
</dbReference>
<dbReference type="HAMAP" id="MF_01007">
    <property type="entry name" value="16SrRNA_methyltr_H"/>
    <property type="match status" value="1"/>
</dbReference>
<dbReference type="InterPro" id="IPR002903">
    <property type="entry name" value="RsmH"/>
</dbReference>
<dbReference type="InterPro" id="IPR023397">
    <property type="entry name" value="SAM-dep_MeTrfase_MraW_recog"/>
</dbReference>
<dbReference type="InterPro" id="IPR029063">
    <property type="entry name" value="SAM-dependent_MTases_sf"/>
</dbReference>
<dbReference type="NCBIfam" id="TIGR00006">
    <property type="entry name" value="16S rRNA (cytosine(1402)-N(4))-methyltransferase RsmH"/>
    <property type="match status" value="1"/>
</dbReference>
<dbReference type="PANTHER" id="PTHR11265:SF0">
    <property type="entry name" value="12S RRNA N4-METHYLCYTIDINE METHYLTRANSFERASE"/>
    <property type="match status" value="1"/>
</dbReference>
<dbReference type="PANTHER" id="PTHR11265">
    <property type="entry name" value="S-ADENOSYL-METHYLTRANSFERASE MRAW"/>
    <property type="match status" value="1"/>
</dbReference>
<dbReference type="Pfam" id="PF01795">
    <property type="entry name" value="Methyltransf_5"/>
    <property type="match status" value="1"/>
</dbReference>
<dbReference type="PIRSF" id="PIRSF004486">
    <property type="entry name" value="MraW"/>
    <property type="match status" value="1"/>
</dbReference>
<dbReference type="SUPFAM" id="SSF81799">
    <property type="entry name" value="Putative methyltransferase TM0872, insert domain"/>
    <property type="match status" value="1"/>
</dbReference>
<dbReference type="SUPFAM" id="SSF53335">
    <property type="entry name" value="S-adenosyl-L-methionine-dependent methyltransferases"/>
    <property type="match status" value="1"/>
</dbReference>
<gene>
    <name evidence="1" type="primary">rsmH</name>
    <name type="synonym">mraW</name>
    <name type="ordered locus">HPP12_0718</name>
</gene>
<protein>
    <recommendedName>
        <fullName evidence="1">Ribosomal RNA small subunit methyltransferase H</fullName>
        <ecNumber evidence="1">2.1.1.199</ecNumber>
    </recommendedName>
    <alternativeName>
        <fullName evidence="1">16S rRNA m(4)C1402 methyltransferase</fullName>
    </alternativeName>
    <alternativeName>
        <fullName evidence="1">rRNA (cytosine-N(4)-)-methyltransferase RsmH</fullName>
    </alternativeName>
</protein>
<keyword id="KW-0963">Cytoplasm</keyword>
<keyword id="KW-0489">Methyltransferase</keyword>
<keyword id="KW-0698">rRNA processing</keyword>
<keyword id="KW-0949">S-adenosyl-L-methionine</keyword>
<keyword id="KW-0808">Transferase</keyword>
<accession>B6JLU2</accession>
<feature type="chain" id="PRO_1000134761" description="Ribosomal RNA small subunit methyltransferase H">
    <location>
        <begin position="1"/>
        <end position="308"/>
    </location>
</feature>
<feature type="binding site" evidence="1">
    <location>
        <begin position="36"/>
        <end position="38"/>
    </location>
    <ligand>
        <name>S-adenosyl-L-methionine</name>
        <dbReference type="ChEBI" id="CHEBI:59789"/>
    </ligand>
</feature>
<feature type="binding site" evidence="1">
    <location>
        <position position="55"/>
    </location>
    <ligand>
        <name>S-adenosyl-L-methionine</name>
        <dbReference type="ChEBI" id="CHEBI:59789"/>
    </ligand>
</feature>
<feature type="binding site" evidence="1">
    <location>
        <position position="86"/>
    </location>
    <ligand>
        <name>S-adenosyl-L-methionine</name>
        <dbReference type="ChEBI" id="CHEBI:59789"/>
    </ligand>
</feature>
<feature type="binding site" evidence="1">
    <location>
        <position position="103"/>
    </location>
    <ligand>
        <name>S-adenosyl-L-methionine</name>
        <dbReference type="ChEBI" id="CHEBI:59789"/>
    </ligand>
</feature>
<feature type="binding site" evidence="1">
    <location>
        <position position="110"/>
    </location>
    <ligand>
        <name>S-adenosyl-L-methionine</name>
        <dbReference type="ChEBI" id="CHEBI:59789"/>
    </ligand>
</feature>
<proteinExistence type="inferred from homology"/>
<comment type="function">
    <text evidence="1">Specifically methylates the N4 position of cytidine in position 1402 (C1402) of 16S rRNA.</text>
</comment>
<comment type="catalytic activity">
    <reaction evidence="1">
        <text>cytidine(1402) in 16S rRNA + S-adenosyl-L-methionine = N(4)-methylcytidine(1402) in 16S rRNA + S-adenosyl-L-homocysteine + H(+)</text>
        <dbReference type="Rhea" id="RHEA:42928"/>
        <dbReference type="Rhea" id="RHEA-COMP:10286"/>
        <dbReference type="Rhea" id="RHEA-COMP:10287"/>
        <dbReference type="ChEBI" id="CHEBI:15378"/>
        <dbReference type="ChEBI" id="CHEBI:57856"/>
        <dbReference type="ChEBI" id="CHEBI:59789"/>
        <dbReference type="ChEBI" id="CHEBI:74506"/>
        <dbReference type="ChEBI" id="CHEBI:82748"/>
        <dbReference type="EC" id="2.1.1.199"/>
    </reaction>
</comment>
<comment type="subcellular location">
    <subcellularLocation>
        <location evidence="1">Cytoplasm</location>
    </subcellularLocation>
</comment>
<comment type="similarity">
    <text evidence="1">Belongs to the methyltransferase superfamily. RsmH family.</text>
</comment>
<name>RSMH_HELP2</name>
<reference key="1">
    <citation type="submission" date="2008-10" db="EMBL/GenBank/DDBJ databases">
        <title>The complete genome sequence of Helicobacter pylori strain P12.</title>
        <authorList>
            <person name="Fischer W."/>
            <person name="Windhager L."/>
            <person name="Karnholz A."/>
            <person name="Zeiller M."/>
            <person name="Zimmer R."/>
            <person name="Haas R."/>
        </authorList>
    </citation>
    <scope>NUCLEOTIDE SEQUENCE [LARGE SCALE GENOMIC DNA]</scope>
    <source>
        <strain>P12</strain>
    </source>
</reference>
<evidence type="ECO:0000255" key="1">
    <source>
        <dbReference type="HAMAP-Rule" id="MF_01007"/>
    </source>
</evidence>
<organism>
    <name type="scientific">Helicobacter pylori (strain P12)</name>
    <dbReference type="NCBI Taxonomy" id="570508"/>
    <lineage>
        <taxon>Bacteria</taxon>
        <taxon>Pseudomonadati</taxon>
        <taxon>Campylobacterota</taxon>
        <taxon>Epsilonproteobacteria</taxon>
        <taxon>Campylobacterales</taxon>
        <taxon>Helicobacteraceae</taxon>
        <taxon>Helicobacter</taxon>
    </lineage>
</organism>
<sequence>MQEIESLHQSVLLQEVLQAFAPLEEGVLIDCTLGLGGHSKALLSQKPHLKLIGIDKDKFAQEIAKERLKAFEGRYNLLSGGFAKRFKEALEMHGERIKGVLVDLGVSSLQLDDDNRGFNFHSHALDMRMDLESDLNAQKVINSYSVVALEKIFRDYGEIKEYKKIAHKIAERRAKKPFKDAKDLSDFLSSFSKNKKIHPATLVFQAVRIEVNSELEELKEFLQCARNLKGAILCVISFHSLEDALVKNAFKDYAKNCICDPSSFKCTCSNNHALGTILTKKPIIPSPEEIKNNRRSRSAKMRVFQFKP</sequence>